<sequence>MSKLSRKSILDEDEDVEEILPKTRGDERSTWVSSSSFVSSSLIFCKCVVTVVELDVGVALLGIVGRVVPLYTVTLLEPEFLNLGGELSWCSMTNFCELFFYFFSFFFSKKRPNIDSK</sequence>
<evidence type="ECO:0000255" key="1"/>
<evidence type="ECO:0000305" key="2"/>
<evidence type="ECO:0000305" key="3">
    <source>
    </source>
</evidence>
<gene>
    <name type="ordered locus">YOL037C</name>
    <name type="ORF">O2101</name>
</gene>
<comment type="subcellular location">
    <subcellularLocation>
        <location evidence="2">Membrane</location>
        <topology evidence="2">Multi-pass membrane protein</topology>
    </subcellularLocation>
</comment>
<comment type="miscellaneous">
    <text evidence="2">Partially overlaps YOL036W.</text>
</comment>
<comment type="caution">
    <text evidence="3">Product of a dubious gene prediction unlikely to encode a functional protein. Because of that it is not part of the S.cerevisiae S288c complete/reference proteome set.</text>
</comment>
<accession>Q08205</accession>
<reference key="1">
    <citation type="journal article" date="1997" name="Yeast">
        <title>Analysis of the DNA sequence of a 34,038 bp region on the left arm of yeast chromosome XV.</title>
        <authorList>
            <person name="Ramezani Rad M."/>
            <person name="Habbig B."/>
            <person name="Jansen G."/>
            <person name="Hattenhorst U."/>
            <person name="Kroll M."/>
            <person name="Hollenberg C.P."/>
        </authorList>
    </citation>
    <scope>NUCLEOTIDE SEQUENCE [GENOMIC DNA]</scope>
</reference>
<reference key="2">
    <citation type="journal article" date="1997" name="Nature">
        <title>The nucleotide sequence of Saccharomyces cerevisiae chromosome XV.</title>
        <authorList>
            <person name="Dujon B."/>
            <person name="Albermann K."/>
            <person name="Aldea M."/>
            <person name="Alexandraki D."/>
            <person name="Ansorge W."/>
            <person name="Arino J."/>
            <person name="Benes V."/>
            <person name="Bohn C."/>
            <person name="Bolotin-Fukuhara M."/>
            <person name="Bordonne R."/>
            <person name="Boyer J."/>
            <person name="Camasses A."/>
            <person name="Casamayor A."/>
            <person name="Casas C."/>
            <person name="Cheret G."/>
            <person name="Cziepluch C."/>
            <person name="Daignan-Fornier B."/>
            <person name="Dang V.-D."/>
            <person name="de Haan M."/>
            <person name="Delius H."/>
            <person name="Durand P."/>
            <person name="Fairhead C."/>
            <person name="Feldmann H."/>
            <person name="Gaillon L."/>
            <person name="Galisson F."/>
            <person name="Gamo F.-J."/>
            <person name="Gancedo C."/>
            <person name="Goffeau A."/>
            <person name="Goulding S.E."/>
            <person name="Grivell L.A."/>
            <person name="Habbig B."/>
            <person name="Hand N.J."/>
            <person name="Hani J."/>
            <person name="Hattenhorst U."/>
            <person name="Hebling U."/>
            <person name="Hernando Y."/>
            <person name="Herrero E."/>
            <person name="Heumann K."/>
            <person name="Hiesel R."/>
            <person name="Hilger F."/>
            <person name="Hofmann B."/>
            <person name="Hollenberg C.P."/>
            <person name="Hughes B."/>
            <person name="Jauniaux J.-C."/>
            <person name="Kalogeropoulos A."/>
            <person name="Katsoulou C."/>
            <person name="Kordes E."/>
            <person name="Lafuente M.J."/>
            <person name="Landt O."/>
            <person name="Louis E.J."/>
            <person name="Maarse A.C."/>
            <person name="Madania A."/>
            <person name="Mannhaupt G."/>
            <person name="Marck C."/>
            <person name="Martin R.P."/>
            <person name="Mewes H.-W."/>
            <person name="Michaux G."/>
            <person name="Paces V."/>
            <person name="Parle-McDermott A.G."/>
            <person name="Pearson B.M."/>
            <person name="Perrin A."/>
            <person name="Pettersson B."/>
            <person name="Poch O."/>
            <person name="Pohl T.M."/>
            <person name="Poirey R."/>
            <person name="Portetelle D."/>
            <person name="Pujol A."/>
            <person name="Purnelle B."/>
            <person name="Ramezani Rad M."/>
            <person name="Rechmann S."/>
            <person name="Schwager C."/>
            <person name="Schweizer M."/>
            <person name="Sor F."/>
            <person name="Sterky F."/>
            <person name="Tarassov I.A."/>
            <person name="Teodoru C."/>
            <person name="Tettelin H."/>
            <person name="Thierry A."/>
            <person name="Tobiasch E."/>
            <person name="Tzermia M."/>
            <person name="Uhlen M."/>
            <person name="Unseld M."/>
            <person name="Valens M."/>
            <person name="Vandenbol M."/>
            <person name="Vetter I."/>
            <person name="Vlcek C."/>
            <person name="Voet M."/>
            <person name="Volckaert G."/>
            <person name="Voss H."/>
            <person name="Wambutt R."/>
            <person name="Wedler H."/>
            <person name="Wiemann S."/>
            <person name="Winsor B."/>
            <person name="Wolfe K.H."/>
            <person name="Zollner A."/>
            <person name="Zumstein E."/>
            <person name="Kleine K."/>
        </authorList>
    </citation>
    <scope>NUCLEOTIDE SEQUENCE [LARGE SCALE GENOMIC DNA]</scope>
    <source>
        <strain>ATCC 204508 / S288c</strain>
    </source>
</reference>
<reference key="3">
    <citation type="journal article" date="2014" name="G3 (Bethesda)">
        <title>The reference genome sequence of Saccharomyces cerevisiae: Then and now.</title>
        <authorList>
            <person name="Engel S.R."/>
            <person name="Dietrich F.S."/>
            <person name="Fisk D.G."/>
            <person name="Binkley G."/>
            <person name="Balakrishnan R."/>
            <person name="Costanzo M.C."/>
            <person name="Dwight S.S."/>
            <person name="Hitz B.C."/>
            <person name="Karra K."/>
            <person name="Nash R.S."/>
            <person name="Weng S."/>
            <person name="Wong E.D."/>
            <person name="Lloyd P."/>
            <person name="Skrzypek M.S."/>
            <person name="Miyasato S.R."/>
            <person name="Simison M."/>
            <person name="Cherry J.M."/>
        </authorList>
    </citation>
    <scope>GENOME REANNOTATION</scope>
    <source>
        <strain>ATCC 204508 / S288c</strain>
    </source>
</reference>
<reference key="4">
    <citation type="journal article" date="2007" name="Genome Res.">
        <title>Approaching a complete repository of sequence-verified protein-encoding clones for Saccharomyces cerevisiae.</title>
        <authorList>
            <person name="Hu Y."/>
            <person name="Rolfs A."/>
            <person name="Bhullar B."/>
            <person name="Murthy T.V.S."/>
            <person name="Zhu C."/>
            <person name="Berger M.F."/>
            <person name="Camargo A.A."/>
            <person name="Kelley F."/>
            <person name="McCarron S."/>
            <person name="Jepson D."/>
            <person name="Richardson A."/>
            <person name="Raphael J."/>
            <person name="Moreira D."/>
            <person name="Taycher E."/>
            <person name="Zuo D."/>
            <person name="Mohr S."/>
            <person name="Kane M.F."/>
            <person name="Williamson J."/>
            <person name="Simpson A.J.G."/>
            <person name="Bulyk M.L."/>
            <person name="Harlow E."/>
            <person name="Marsischky G."/>
            <person name="Kolodner R.D."/>
            <person name="LaBaer J."/>
        </authorList>
    </citation>
    <scope>NUCLEOTIDE SEQUENCE [GENOMIC DNA]</scope>
    <source>
        <strain>ATCC 204508 / S288c</strain>
    </source>
</reference>
<name>YO037_YEAST</name>
<feature type="chain" id="PRO_0000299689" description="Putative uncharacterized protein YOL037C">
    <location>
        <begin position="1"/>
        <end position="117"/>
    </location>
</feature>
<feature type="transmembrane region" description="Helical" evidence="1">
    <location>
        <begin position="32"/>
        <end position="52"/>
    </location>
</feature>
<feature type="transmembrane region" description="Helical" evidence="1">
    <location>
        <begin position="56"/>
        <end position="76"/>
    </location>
</feature>
<feature type="transmembrane region" description="Helical" evidence="1">
    <location>
        <begin position="87"/>
        <end position="107"/>
    </location>
</feature>
<proteinExistence type="uncertain"/>
<dbReference type="EMBL" id="Z74779">
    <property type="protein sequence ID" value="CAA99037.1"/>
    <property type="molecule type" value="Genomic_DNA"/>
</dbReference>
<dbReference type="EMBL" id="AY693365">
    <property type="protein sequence ID" value="AAT93384.1"/>
    <property type="molecule type" value="Genomic_DNA"/>
</dbReference>
<dbReference type="PIR" id="S66720">
    <property type="entry name" value="S66720"/>
</dbReference>
<dbReference type="IntAct" id="Q08205">
    <property type="interactions" value="1"/>
</dbReference>
<dbReference type="PaxDb" id="4932-YOL037C"/>
<dbReference type="EnsemblFungi" id="YOL037C_mRNA">
    <property type="protein sequence ID" value="YOL037C"/>
    <property type="gene ID" value="YOL037C"/>
</dbReference>
<dbReference type="AGR" id="SGD:S000005397"/>
<dbReference type="SGD" id="S000005397">
    <property type="gene designation" value="YOL037C"/>
</dbReference>
<dbReference type="HOGENOM" id="CLU_2086672_0_0_1"/>
<dbReference type="GO" id="GO:0016020">
    <property type="term" value="C:membrane"/>
    <property type="evidence" value="ECO:0007669"/>
    <property type="project" value="UniProtKB-SubCell"/>
</dbReference>
<keyword id="KW-0472">Membrane</keyword>
<keyword id="KW-0812">Transmembrane</keyword>
<keyword id="KW-1133">Transmembrane helix</keyword>
<protein>
    <recommendedName>
        <fullName>Putative uncharacterized protein YOL037C</fullName>
    </recommendedName>
</protein>
<organism>
    <name type="scientific">Saccharomyces cerevisiae (strain ATCC 204508 / S288c)</name>
    <name type="common">Baker's yeast</name>
    <dbReference type="NCBI Taxonomy" id="559292"/>
    <lineage>
        <taxon>Eukaryota</taxon>
        <taxon>Fungi</taxon>
        <taxon>Dikarya</taxon>
        <taxon>Ascomycota</taxon>
        <taxon>Saccharomycotina</taxon>
        <taxon>Saccharomycetes</taxon>
        <taxon>Saccharomycetales</taxon>
        <taxon>Saccharomycetaceae</taxon>
        <taxon>Saccharomyces</taxon>
    </lineage>
</organism>